<evidence type="ECO:0000255" key="1">
    <source>
        <dbReference type="HAMAP-Rule" id="MF_04030"/>
    </source>
</evidence>
<sequence length="824" mass="93363">MSISSLFGGRYDNKFLLNMSSAPKIELIVDKVASLSERRLEGRLPEDWFRHIMDPETEFNGEFADALCIGIDEFAQPLPFLPFKALLVTGTAGAGKTNSIQTLAANLDCIVTATTSIAAQNLSVVLNRSKSAQVKTIFKTFGFNSSHVSMSERQSYIANDERSIQIQQKQDLSIYWNVISDIAERALGAVACKTKELPDLCESSVIVIDEAGVILRHILHTVVFFYWFYNALYKTPLYENGIVPCIVCVGSPTQSNALVTSFNPLTQNKDVKRGIDVLSALICDDVLSKYCEVDNNWIIFVNNKRCADHAFGDFLKHIEFGLPLKPELIEYVDQFVKPASYIRNPMNEIETTRLFLSHNEVKNYFRSLHEQVEVTNRNNLFVFPVYFLIKNKTFEDYKSEIGNFSLEIEPWFKSNIHRLNTYSQFADQDLSKTVQLEEIVLEDGSVEETLITCHLKHIRNSSIGVTSKIKASTVGFSGTYEKFVELLQSDLFIEKTSCEQTIHAYSFLSGLMFGGMYSFCCSEFTTPEVLMEIKNIKMPSIEFLESEMSRMSRDVQTVETDERYDFGLVDDGLSDMDLLEIDPCGDPFFTRYSKLPLTNSLSFEEISLLYTTFKDIFISRFAILQKHTKGKFGKTLLVTYNRNNVSRKQCGEIYSHLKSFYGMLTYAIPANNYTLEGYTNDNVVHLGTDKQLPQILYKKGLPRLVIKDEMGFISVLDNNVSKFVDVVNGQSFHLCTTVDYATVSKVSMTITKSQGLSIQKVAIDFGSDPKNLKLSSIYVGMSRVTDPNNLIMNVNPLRLNYENDNFIAPHIVKALKNENTMLIF</sequence>
<organism>
    <name type="scientific">Human herpesvirus 6B (strain Z29)</name>
    <name type="common">HHV-6 variant B</name>
    <name type="synonym">Human B lymphotropic virus</name>
    <dbReference type="NCBI Taxonomy" id="36351"/>
    <lineage>
        <taxon>Viruses</taxon>
        <taxon>Duplodnaviria</taxon>
        <taxon>Heunggongvirae</taxon>
        <taxon>Peploviricota</taxon>
        <taxon>Herviviricetes</taxon>
        <taxon>Herpesvirales</taxon>
        <taxon>Orthoherpesviridae</taxon>
        <taxon>Betaherpesvirinae</taxon>
        <taxon>Roseolovirus</taxon>
        <taxon>Roseolovirus humanbeta6b</taxon>
        <taxon>Human herpesvirus 6B</taxon>
    </lineage>
</organism>
<proteinExistence type="inferred from homology"/>
<organismHost>
    <name type="scientific">Homo sapiens</name>
    <name type="common">Human</name>
    <dbReference type="NCBI Taxonomy" id="9606"/>
</organismHost>
<reference key="1">
    <citation type="journal article" date="1996" name="Arch. Virol.">
        <title>Restriction endonuclease mapping and molecular cloning of the human herpesvirus 6 variant B strain Z29 genome.</title>
        <authorList>
            <person name="Lindquester G.J."/>
            <person name="Inoue N."/>
            <person name="Allen R.D."/>
            <person name="Castelli J.W."/>
            <person name="Stamey F.R."/>
            <person name="Dambaugh T.R."/>
            <person name="O'Brian J.J."/>
            <person name="Danovich R.M."/>
            <person name="Frenkel N."/>
            <person name="Pellett P.E."/>
        </authorList>
    </citation>
    <scope>NUCLEOTIDE SEQUENCE [GENOMIC DNA]</scope>
</reference>
<reference key="2">
    <citation type="journal article" date="1999" name="J. Virol.">
        <title>Human herpesvirus 6B genome sequence: coding content and comparison with human herpesvirus 6A.</title>
        <authorList>
            <person name="Dominguez G."/>
            <person name="Dambaugh T.R."/>
            <person name="Stamey F.R."/>
            <person name="Dewhurst S."/>
            <person name="Inoue N."/>
            <person name="Pellett P.E."/>
        </authorList>
    </citation>
    <scope>NUCLEOTIDE SEQUENCE [LARGE SCALE GENOMIC DNA]</scope>
</reference>
<feature type="chain" id="PRO_0000115850" description="DNA replication helicase">
    <location>
        <begin position="1"/>
        <end position="824"/>
    </location>
</feature>
<feature type="binding site" evidence="1">
    <location>
        <begin position="90"/>
        <end position="97"/>
    </location>
    <ligand>
        <name>ATP</name>
        <dbReference type="ChEBI" id="CHEBI:30616"/>
    </ligand>
</feature>
<accession>P52450</accession>
<gene>
    <name evidence="1" type="primary">HELI</name>
    <name type="ordered locus">CB4R</name>
    <name type="ordered locus">U77</name>
</gene>
<keyword id="KW-0067">ATP-binding</keyword>
<keyword id="KW-0235">DNA replication</keyword>
<keyword id="KW-0347">Helicase</keyword>
<keyword id="KW-1048">Host nucleus</keyword>
<keyword id="KW-0378">Hydrolase</keyword>
<keyword id="KW-0547">Nucleotide-binding</keyword>
<keyword id="KW-1185">Reference proteome</keyword>
<dbReference type="EC" id="3.6.4.-" evidence="1"/>
<dbReference type="EMBL" id="AF157706">
    <property type="protein sequence ID" value="AAB06360.1"/>
    <property type="molecule type" value="Genomic_DNA"/>
</dbReference>
<dbReference type="PIR" id="T44222">
    <property type="entry name" value="T44222"/>
</dbReference>
<dbReference type="RefSeq" id="NP_050256.1">
    <property type="nucleotide sequence ID" value="NC_000898.1"/>
</dbReference>
<dbReference type="DNASU" id="1497077"/>
<dbReference type="GeneID" id="1497077"/>
<dbReference type="KEGG" id="vg:1497077"/>
<dbReference type="Proteomes" id="UP000006930">
    <property type="component" value="Segment"/>
</dbReference>
<dbReference type="GO" id="GO:0042025">
    <property type="term" value="C:host cell nucleus"/>
    <property type="evidence" value="ECO:0007669"/>
    <property type="project" value="UniProtKB-SubCell"/>
</dbReference>
<dbReference type="GO" id="GO:0005524">
    <property type="term" value="F:ATP binding"/>
    <property type="evidence" value="ECO:0007669"/>
    <property type="project" value="UniProtKB-KW"/>
</dbReference>
<dbReference type="GO" id="GO:0004386">
    <property type="term" value="F:helicase activity"/>
    <property type="evidence" value="ECO:0007669"/>
    <property type="project" value="UniProtKB-KW"/>
</dbReference>
<dbReference type="GO" id="GO:0016787">
    <property type="term" value="F:hydrolase activity"/>
    <property type="evidence" value="ECO:0007669"/>
    <property type="project" value="UniProtKB-KW"/>
</dbReference>
<dbReference type="GO" id="GO:0006260">
    <property type="term" value="P:DNA replication"/>
    <property type="evidence" value="ECO:0007669"/>
    <property type="project" value="UniProtKB-KW"/>
</dbReference>
<dbReference type="CDD" id="cd18809">
    <property type="entry name" value="SF1_C_RecD"/>
    <property type="match status" value="1"/>
</dbReference>
<dbReference type="Gene3D" id="3.40.50.300">
    <property type="entry name" value="P-loop containing nucleotide triphosphate hydrolases"/>
    <property type="match status" value="1"/>
</dbReference>
<dbReference type="HAMAP" id="MF_04030">
    <property type="entry name" value="HSV_HELI"/>
    <property type="match status" value="1"/>
</dbReference>
<dbReference type="InterPro" id="IPR003840">
    <property type="entry name" value="DNA_helicase_dom"/>
</dbReference>
<dbReference type="InterPro" id="IPR034711">
    <property type="entry name" value="HSV_HELI"/>
</dbReference>
<dbReference type="InterPro" id="IPR027417">
    <property type="entry name" value="P-loop_NTPase"/>
</dbReference>
<dbReference type="Pfam" id="PF02689">
    <property type="entry name" value="Herpes_Helicase"/>
    <property type="match status" value="1"/>
</dbReference>
<dbReference type="SUPFAM" id="SSF52540">
    <property type="entry name" value="P-loop containing nucleoside triphosphate hydrolases"/>
    <property type="match status" value="2"/>
</dbReference>
<protein>
    <recommendedName>
        <fullName evidence="1">DNA replication helicase</fullName>
        <ecNumber evidence="1">3.6.4.-</ecNumber>
    </recommendedName>
</protein>
<comment type="function">
    <text evidence="1">Component of the helicase/primase complex. Unwinds the DNA at the replication forks and generates single-stranded DNA for both leading and lagging strand synthesis. The primase synthesizes short RNA primers on the lagging strand that the polymerase elongates using dNTPs. Possesses helicase-like motifs and therefore may act as the helicase subunit of the complex.</text>
</comment>
<comment type="subunit">
    <text evidence="1">Associates with the primase and the primase-associated factor to form the helicase-primase complex.</text>
</comment>
<comment type="subcellular location">
    <subcellularLocation>
        <location evidence="1">Host nucleus</location>
    </subcellularLocation>
</comment>
<comment type="similarity">
    <text evidence="1">Belongs to the herpesviridae helicase family.</text>
</comment>
<name>HELI_HHV6Z</name>